<dbReference type="EMBL" id="AL591978">
    <property type="protein sequence ID" value="CAC99286.1"/>
    <property type="molecule type" value="Genomic_DNA"/>
</dbReference>
<dbReference type="PIR" id="AH1225">
    <property type="entry name" value="AH1225"/>
</dbReference>
<dbReference type="RefSeq" id="NP_464733.1">
    <property type="nucleotide sequence ID" value="NC_003210.1"/>
</dbReference>
<dbReference type="RefSeq" id="WP_010989707.1">
    <property type="nucleotide sequence ID" value="NZ_CP149495.1"/>
</dbReference>
<dbReference type="SMR" id="Q8Y7R3"/>
<dbReference type="STRING" id="169963.gene:17593864"/>
<dbReference type="PaxDb" id="169963-lmo1208"/>
<dbReference type="EnsemblBacteria" id="CAC99286">
    <property type="protein sequence ID" value="CAC99286"/>
    <property type="gene ID" value="CAC99286"/>
</dbReference>
<dbReference type="GeneID" id="986064"/>
<dbReference type="KEGG" id="lmo:lmo1208"/>
<dbReference type="PATRIC" id="fig|169963.11.peg.1239"/>
<dbReference type="eggNOG" id="COG1492">
    <property type="taxonomic scope" value="Bacteria"/>
</dbReference>
<dbReference type="HOGENOM" id="CLU_019250_2_2_9"/>
<dbReference type="OrthoDB" id="9808302at2"/>
<dbReference type="PhylomeDB" id="Q8Y7R3"/>
<dbReference type="BioCyc" id="LMON169963:LMO1208-MONOMER"/>
<dbReference type="UniPathway" id="UPA00148"/>
<dbReference type="Proteomes" id="UP000000817">
    <property type="component" value="Chromosome"/>
</dbReference>
<dbReference type="GO" id="GO:0015420">
    <property type="term" value="F:ABC-type vitamin B12 transporter activity"/>
    <property type="evidence" value="ECO:0007669"/>
    <property type="project" value="UniProtKB-UniRule"/>
</dbReference>
<dbReference type="GO" id="GO:0003824">
    <property type="term" value="F:catalytic activity"/>
    <property type="evidence" value="ECO:0007669"/>
    <property type="project" value="InterPro"/>
</dbReference>
<dbReference type="GO" id="GO:0009236">
    <property type="term" value="P:cobalamin biosynthetic process"/>
    <property type="evidence" value="ECO:0007669"/>
    <property type="project" value="UniProtKB-UniRule"/>
</dbReference>
<dbReference type="CDD" id="cd05389">
    <property type="entry name" value="CobQ_N"/>
    <property type="match status" value="1"/>
</dbReference>
<dbReference type="CDD" id="cd01750">
    <property type="entry name" value="GATase1_CobQ"/>
    <property type="match status" value="1"/>
</dbReference>
<dbReference type="Gene3D" id="3.40.50.880">
    <property type="match status" value="1"/>
</dbReference>
<dbReference type="Gene3D" id="3.40.50.300">
    <property type="entry name" value="P-loop containing nucleotide triphosphate hydrolases"/>
    <property type="match status" value="1"/>
</dbReference>
<dbReference type="HAMAP" id="MF_00028">
    <property type="entry name" value="CobQ"/>
    <property type="match status" value="1"/>
</dbReference>
<dbReference type="InterPro" id="IPR029062">
    <property type="entry name" value="Class_I_gatase-like"/>
</dbReference>
<dbReference type="InterPro" id="IPR002586">
    <property type="entry name" value="CobQ/CobB/MinD/ParA_Nub-bd_dom"/>
</dbReference>
<dbReference type="InterPro" id="IPR033949">
    <property type="entry name" value="CobQ_GATase1"/>
</dbReference>
<dbReference type="InterPro" id="IPR047045">
    <property type="entry name" value="CobQ_N"/>
</dbReference>
<dbReference type="InterPro" id="IPR004459">
    <property type="entry name" value="CobQ_synth"/>
</dbReference>
<dbReference type="InterPro" id="IPR011698">
    <property type="entry name" value="GATase_3"/>
</dbReference>
<dbReference type="InterPro" id="IPR027417">
    <property type="entry name" value="P-loop_NTPase"/>
</dbReference>
<dbReference type="NCBIfam" id="TIGR00313">
    <property type="entry name" value="cobQ"/>
    <property type="match status" value="1"/>
</dbReference>
<dbReference type="NCBIfam" id="NF001989">
    <property type="entry name" value="PRK00784.1"/>
    <property type="match status" value="1"/>
</dbReference>
<dbReference type="PANTHER" id="PTHR21343:SF1">
    <property type="entry name" value="COBYRIC ACID SYNTHASE"/>
    <property type="match status" value="1"/>
</dbReference>
<dbReference type="PANTHER" id="PTHR21343">
    <property type="entry name" value="DETHIOBIOTIN SYNTHETASE"/>
    <property type="match status" value="1"/>
</dbReference>
<dbReference type="Pfam" id="PF01656">
    <property type="entry name" value="CbiA"/>
    <property type="match status" value="1"/>
</dbReference>
<dbReference type="Pfam" id="PF07685">
    <property type="entry name" value="GATase_3"/>
    <property type="match status" value="1"/>
</dbReference>
<dbReference type="SUPFAM" id="SSF52317">
    <property type="entry name" value="Class I glutamine amidotransferase-like"/>
    <property type="match status" value="1"/>
</dbReference>
<dbReference type="SUPFAM" id="SSF52540">
    <property type="entry name" value="P-loop containing nucleoside triphosphate hydrolases"/>
    <property type="match status" value="1"/>
</dbReference>
<dbReference type="PROSITE" id="PS51274">
    <property type="entry name" value="GATASE_COBBQ"/>
    <property type="match status" value="1"/>
</dbReference>
<evidence type="ECO:0000255" key="1">
    <source>
        <dbReference type="HAMAP-Rule" id="MF_00028"/>
    </source>
</evidence>
<name>COBQ_LISMO</name>
<organism>
    <name type="scientific">Listeria monocytogenes serovar 1/2a (strain ATCC BAA-679 / EGD-e)</name>
    <dbReference type="NCBI Taxonomy" id="169963"/>
    <lineage>
        <taxon>Bacteria</taxon>
        <taxon>Bacillati</taxon>
        <taxon>Bacillota</taxon>
        <taxon>Bacilli</taxon>
        <taxon>Bacillales</taxon>
        <taxon>Listeriaceae</taxon>
        <taxon>Listeria</taxon>
    </lineage>
</organism>
<keyword id="KW-0169">Cobalamin biosynthesis</keyword>
<keyword id="KW-0315">Glutamine amidotransferase</keyword>
<keyword id="KW-1185">Reference proteome</keyword>
<gene>
    <name evidence="1" type="primary">cobQ</name>
    <name type="synonym">cbiP</name>
    <name type="ordered locus">lmo1208</name>
</gene>
<feature type="chain" id="PRO_0000141308" description="Cobyric acid synthase">
    <location>
        <begin position="1"/>
        <end position="511"/>
    </location>
</feature>
<feature type="domain" description="GATase cobBQ-type" evidence="1">
    <location>
        <begin position="251"/>
        <end position="443"/>
    </location>
</feature>
<feature type="active site" description="Nucleophile" evidence="1">
    <location>
        <position position="332"/>
    </location>
</feature>
<feature type="active site" evidence="1">
    <location>
        <position position="435"/>
    </location>
</feature>
<protein>
    <recommendedName>
        <fullName evidence="1">Cobyric acid synthase</fullName>
    </recommendedName>
</protein>
<proteinExistence type="inferred from homology"/>
<sequence length="511" mass="56263">MVKQIMIQGTASDAGKSVLVAGLCRLFKNKGKRVVPFKSQNMSLNSFITATGDEMGRAQVFQAEAAGVFPDVRMNPVLLKPTNDRQSQVIFMGAILDNMDAVTYHDFKQTLIPKIQAVYQSLADENDIIVLEGAGSPAEINLNDRDIVNMGMAKMVDAPVVLVADIDKGGVFASIYGTIMLLNEEERARIKGVIINKFRGDVALLQPGIDMIEELTNVPVIGVIPYANLQLEEEDSVSLNGKNYAPDSNALLDIAIICLPRISNFTDFHSLEIQPEISLRYIRNLADFGKPDLVIIPGSKNTLEDMAFLEESGLKKAIQNFAENAGKVIGICGGYQMLGQKMLDPDQVESKQLEIAGLGLLDTETIFLDQKRTTQITGVTHSGEAVEGYEIHMGETKRGESTSPFCKIKAVNGNEETHQDGAISANKNIIGTYIHGIFDNDVFLGNLFDELLTRKNQSIYPHEIINLKEHKEQEYDKLAALLEANIQMDQLEKIMKGEKICVSTQKPAIKE</sequence>
<comment type="function">
    <text evidence="1">Catalyzes amidations at positions B, D, E, and G on adenosylcobyrinic A,C-diamide. NH(2) groups are provided by glutamine, and one molecule of ATP is hydrogenolyzed for each amidation.</text>
</comment>
<comment type="pathway">
    <text evidence="1">Cofactor biosynthesis; adenosylcobalamin biosynthesis.</text>
</comment>
<comment type="similarity">
    <text evidence="1">Belongs to the CobB/CobQ family. CobQ subfamily.</text>
</comment>
<accession>Q8Y7R3</accession>
<reference key="1">
    <citation type="journal article" date="2001" name="Science">
        <title>Comparative genomics of Listeria species.</title>
        <authorList>
            <person name="Glaser P."/>
            <person name="Frangeul L."/>
            <person name="Buchrieser C."/>
            <person name="Rusniok C."/>
            <person name="Amend A."/>
            <person name="Baquero F."/>
            <person name="Berche P."/>
            <person name="Bloecker H."/>
            <person name="Brandt P."/>
            <person name="Chakraborty T."/>
            <person name="Charbit A."/>
            <person name="Chetouani F."/>
            <person name="Couve E."/>
            <person name="de Daruvar A."/>
            <person name="Dehoux P."/>
            <person name="Domann E."/>
            <person name="Dominguez-Bernal G."/>
            <person name="Duchaud E."/>
            <person name="Durant L."/>
            <person name="Dussurget O."/>
            <person name="Entian K.-D."/>
            <person name="Fsihi H."/>
            <person name="Garcia-del Portillo F."/>
            <person name="Garrido P."/>
            <person name="Gautier L."/>
            <person name="Goebel W."/>
            <person name="Gomez-Lopez N."/>
            <person name="Hain T."/>
            <person name="Hauf J."/>
            <person name="Jackson D."/>
            <person name="Jones L.-M."/>
            <person name="Kaerst U."/>
            <person name="Kreft J."/>
            <person name="Kuhn M."/>
            <person name="Kunst F."/>
            <person name="Kurapkat G."/>
            <person name="Madueno E."/>
            <person name="Maitournam A."/>
            <person name="Mata Vicente J."/>
            <person name="Ng E."/>
            <person name="Nedjari H."/>
            <person name="Nordsiek G."/>
            <person name="Novella S."/>
            <person name="de Pablos B."/>
            <person name="Perez-Diaz J.-C."/>
            <person name="Purcell R."/>
            <person name="Remmel B."/>
            <person name="Rose M."/>
            <person name="Schlueter T."/>
            <person name="Simoes N."/>
            <person name="Tierrez A."/>
            <person name="Vazquez-Boland J.-A."/>
            <person name="Voss H."/>
            <person name="Wehland J."/>
            <person name="Cossart P."/>
        </authorList>
    </citation>
    <scope>NUCLEOTIDE SEQUENCE [LARGE SCALE GENOMIC DNA]</scope>
    <source>
        <strain>ATCC BAA-679 / EGD-e</strain>
    </source>
</reference>